<protein>
    <recommendedName>
        <fullName evidence="1">Small ribosomal subunit protein uS17</fullName>
    </recommendedName>
    <alternativeName>
        <fullName evidence="2">30S ribosomal protein S17</fullName>
    </alternativeName>
</protein>
<name>RS17_NANEQ</name>
<dbReference type="EMBL" id="AE017199">
    <property type="protein sequence ID" value="AAR39174.1"/>
    <property type="molecule type" value="Genomic_DNA"/>
</dbReference>
<dbReference type="SMR" id="Q74NJ4"/>
<dbReference type="STRING" id="228908.NEQ326"/>
<dbReference type="EnsemblBacteria" id="AAR39174">
    <property type="protein sequence ID" value="AAR39174"/>
    <property type="gene ID" value="NEQ326"/>
</dbReference>
<dbReference type="KEGG" id="neq:NEQ326"/>
<dbReference type="PATRIC" id="fig|228908.8.peg.333"/>
<dbReference type="HOGENOM" id="CLU_073626_0_3_2"/>
<dbReference type="Proteomes" id="UP000000578">
    <property type="component" value="Chromosome"/>
</dbReference>
<dbReference type="GO" id="GO:0022627">
    <property type="term" value="C:cytosolic small ribosomal subunit"/>
    <property type="evidence" value="ECO:0007669"/>
    <property type="project" value="TreeGrafter"/>
</dbReference>
<dbReference type="GO" id="GO:0019843">
    <property type="term" value="F:rRNA binding"/>
    <property type="evidence" value="ECO:0007669"/>
    <property type="project" value="UniProtKB-UniRule"/>
</dbReference>
<dbReference type="GO" id="GO:0003735">
    <property type="term" value="F:structural constituent of ribosome"/>
    <property type="evidence" value="ECO:0007669"/>
    <property type="project" value="InterPro"/>
</dbReference>
<dbReference type="GO" id="GO:0006412">
    <property type="term" value="P:translation"/>
    <property type="evidence" value="ECO:0007669"/>
    <property type="project" value="UniProtKB-UniRule"/>
</dbReference>
<dbReference type="CDD" id="cd00364">
    <property type="entry name" value="Ribosomal_uS17"/>
    <property type="match status" value="1"/>
</dbReference>
<dbReference type="Gene3D" id="2.40.50.1000">
    <property type="match status" value="1"/>
</dbReference>
<dbReference type="HAMAP" id="MF_01345_A">
    <property type="entry name" value="Ribosomal_uS17_A"/>
    <property type="match status" value="1"/>
</dbReference>
<dbReference type="InterPro" id="IPR012340">
    <property type="entry name" value="NA-bd_OB-fold"/>
</dbReference>
<dbReference type="InterPro" id="IPR000266">
    <property type="entry name" value="Ribosomal_uS17"/>
</dbReference>
<dbReference type="InterPro" id="IPR028333">
    <property type="entry name" value="Ribosomal_uS17_arc/euk"/>
</dbReference>
<dbReference type="InterPro" id="IPR019978">
    <property type="entry name" value="Ribosomal_uS17_archaeal"/>
</dbReference>
<dbReference type="InterPro" id="IPR019979">
    <property type="entry name" value="Ribosomal_uS17_CS"/>
</dbReference>
<dbReference type="NCBIfam" id="NF006345">
    <property type="entry name" value="PRK08572.1"/>
    <property type="match status" value="1"/>
</dbReference>
<dbReference type="NCBIfam" id="TIGR03630">
    <property type="entry name" value="uS17_arch"/>
    <property type="match status" value="1"/>
</dbReference>
<dbReference type="PANTHER" id="PTHR10744">
    <property type="entry name" value="40S RIBOSOMAL PROTEIN S11 FAMILY MEMBER"/>
    <property type="match status" value="1"/>
</dbReference>
<dbReference type="PANTHER" id="PTHR10744:SF9">
    <property type="entry name" value="40S RIBOSOMAL PROTEIN S11-RELATED"/>
    <property type="match status" value="1"/>
</dbReference>
<dbReference type="Pfam" id="PF00366">
    <property type="entry name" value="Ribosomal_S17"/>
    <property type="match status" value="1"/>
</dbReference>
<dbReference type="PRINTS" id="PR00973">
    <property type="entry name" value="RIBOSOMALS17"/>
</dbReference>
<dbReference type="SUPFAM" id="SSF50249">
    <property type="entry name" value="Nucleic acid-binding proteins"/>
    <property type="match status" value="1"/>
</dbReference>
<dbReference type="PROSITE" id="PS00056">
    <property type="entry name" value="RIBOSOMAL_S17"/>
    <property type="match status" value="1"/>
</dbReference>
<comment type="function">
    <text evidence="1">One of the primary rRNA binding proteins, it binds specifically to the 5'-end of 16S ribosomal RNA.</text>
</comment>
<comment type="subunit">
    <text evidence="1">Part of the 30S ribosomal subunit.</text>
</comment>
<comment type="similarity">
    <text evidence="1">Belongs to the universal ribosomal protein uS17 family.</text>
</comment>
<organism>
    <name type="scientific">Nanoarchaeum equitans (strain Kin4-M)</name>
    <dbReference type="NCBI Taxonomy" id="228908"/>
    <lineage>
        <taxon>Archaea</taxon>
        <taxon>Nanobdellota</taxon>
        <taxon>Candidatus Nanoarchaeia</taxon>
        <taxon>Nanoarchaeales</taxon>
        <taxon>Nanoarchaeaceae</taxon>
        <taxon>Nanoarchaeum</taxon>
    </lineage>
</organism>
<sequence>MKLAELIELPKEQCNDKKCPHHGHLKVRGFFFKGKVIKKSDNKTVKIEIIRYYWLPKYERYELRRTRITAYLPECLKDIKEGDYVLIGETRPLSKTKHFVVLGKLKKGIALTQ</sequence>
<feature type="chain" id="PRO_0000232612" description="Small ribosomal subunit protein uS17">
    <location>
        <begin position="1"/>
        <end position="113"/>
    </location>
</feature>
<evidence type="ECO:0000255" key="1">
    <source>
        <dbReference type="HAMAP-Rule" id="MF_01345"/>
    </source>
</evidence>
<evidence type="ECO:0000305" key="2"/>
<keyword id="KW-1185">Reference proteome</keyword>
<keyword id="KW-0687">Ribonucleoprotein</keyword>
<keyword id="KW-0689">Ribosomal protein</keyword>
<keyword id="KW-0694">RNA-binding</keyword>
<keyword id="KW-0699">rRNA-binding</keyword>
<proteinExistence type="inferred from homology"/>
<reference key="1">
    <citation type="journal article" date="2003" name="Proc. Natl. Acad. Sci. U.S.A.">
        <title>The genome of Nanoarchaeum equitans: insights into early archaeal evolution and derived parasitism.</title>
        <authorList>
            <person name="Waters E."/>
            <person name="Hohn M.J."/>
            <person name="Ahel I."/>
            <person name="Graham D.E."/>
            <person name="Adams M.D."/>
            <person name="Barnstead M."/>
            <person name="Beeson K.Y."/>
            <person name="Bibbs L."/>
            <person name="Bolanos R."/>
            <person name="Keller M."/>
            <person name="Kretz K."/>
            <person name="Lin X."/>
            <person name="Mathur E."/>
            <person name="Ni J."/>
            <person name="Podar M."/>
            <person name="Richardson T."/>
            <person name="Sutton G.G."/>
            <person name="Simon M."/>
            <person name="Soell D."/>
            <person name="Stetter K.O."/>
            <person name="Short J.M."/>
            <person name="Noorderwier M."/>
        </authorList>
    </citation>
    <scope>NUCLEOTIDE SEQUENCE [LARGE SCALE GENOMIC DNA]</scope>
    <source>
        <strain>Kin4-M</strain>
    </source>
</reference>
<gene>
    <name evidence="1" type="primary">rps17</name>
    <name type="ordered locus">NEQ326</name>
</gene>
<accession>Q74NJ4</accession>